<protein>
    <recommendedName>
        <fullName evidence="1">Large ribosomal subunit protein uL15</fullName>
    </recommendedName>
    <alternativeName>
        <fullName evidence="3">50S ribosomal protein L15</fullName>
    </alternativeName>
</protein>
<sequence>MKLSDIADNAGSRKKRMRVGRGIGSGKGKQSGRGGKGQTARSGVRIKGFEGGQMPMHRRLPKRGFNNIFRVEFAEINLDRLQEAVDAKKIDAGSVVNVEALVKGGVLRRAKGGLRLLGRGELKSKLNIEVHGATKTAIAAVEKAGGSVKILAPAKEEGEAA</sequence>
<proteinExistence type="inferred from homology"/>
<reference key="1">
    <citation type="journal article" date="2002" name="DNA Res.">
        <title>Complete genomic sequence of nitrogen-fixing symbiotic bacterium Bradyrhizobium japonicum USDA110.</title>
        <authorList>
            <person name="Kaneko T."/>
            <person name="Nakamura Y."/>
            <person name="Sato S."/>
            <person name="Minamisawa K."/>
            <person name="Uchiumi T."/>
            <person name="Sasamoto S."/>
            <person name="Watanabe A."/>
            <person name="Idesawa K."/>
            <person name="Iriguchi M."/>
            <person name="Kawashima K."/>
            <person name="Kohara M."/>
            <person name="Matsumoto M."/>
            <person name="Shimpo S."/>
            <person name="Tsuruoka H."/>
            <person name="Wada T."/>
            <person name="Yamada M."/>
            <person name="Tabata S."/>
        </authorList>
    </citation>
    <scope>NUCLEOTIDE SEQUENCE [LARGE SCALE GENOMIC DNA]</scope>
    <source>
        <strain>JCM 10833 / BCRC 13528 / IAM 13628 / NBRC 14792 / USDA 110</strain>
    </source>
</reference>
<feature type="chain" id="PRO_0000104689" description="Large ribosomal subunit protein uL15">
    <location>
        <begin position="1"/>
        <end position="161"/>
    </location>
</feature>
<feature type="region of interest" description="Disordered" evidence="2">
    <location>
        <begin position="1"/>
        <end position="42"/>
    </location>
</feature>
<feature type="compositionally biased region" description="Gly residues" evidence="2">
    <location>
        <begin position="21"/>
        <end position="37"/>
    </location>
</feature>
<comment type="function">
    <text evidence="1">Binds to the 23S rRNA.</text>
</comment>
<comment type="subunit">
    <text evidence="1">Part of the 50S ribosomal subunit.</text>
</comment>
<comment type="similarity">
    <text evidence="1">Belongs to the universal ribosomal protein uL15 family.</text>
</comment>
<keyword id="KW-1185">Reference proteome</keyword>
<keyword id="KW-0687">Ribonucleoprotein</keyword>
<keyword id="KW-0689">Ribosomal protein</keyword>
<keyword id="KW-0694">RNA-binding</keyword>
<keyword id="KW-0699">rRNA-binding</keyword>
<dbReference type="EMBL" id="BA000040">
    <property type="protein sequence ID" value="BAC50646.1"/>
    <property type="molecule type" value="Genomic_DNA"/>
</dbReference>
<dbReference type="RefSeq" id="NP_772021.1">
    <property type="nucleotide sequence ID" value="NC_004463.1"/>
</dbReference>
<dbReference type="RefSeq" id="WP_011088136.1">
    <property type="nucleotide sequence ID" value="NZ_CP011360.1"/>
</dbReference>
<dbReference type="SMR" id="Q89JA3"/>
<dbReference type="FunCoup" id="Q89JA3">
    <property type="interactions" value="828"/>
</dbReference>
<dbReference type="STRING" id="224911.AAV28_24315"/>
<dbReference type="EnsemblBacteria" id="BAC50646">
    <property type="protein sequence ID" value="BAC50646"/>
    <property type="gene ID" value="BAC50646"/>
</dbReference>
<dbReference type="GeneID" id="46492379"/>
<dbReference type="KEGG" id="bja:bll5381"/>
<dbReference type="PATRIC" id="fig|224911.44.peg.5280"/>
<dbReference type="eggNOG" id="COG0200">
    <property type="taxonomic scope" value="Bacteria"/>
</dbReference>
<dbReference type="HOGENOM" id="CLU_055188_4_0_5"/>
<dbReference type="InParanoid" id="Q89JA3"/>
<dbReference type="OrthoDB" id="9810293at2"/>
<dbReference type="PhylomeDB" id="Q89JA3"/>
<dbReference type="PRO" id="PR:Q89JA3"/>
<dbReference type="Proteomes" id="UP000002526">
    <property type="component" value="Chromosome"/>
</dbReference>
<dbReference type="GO" id="GO:0022625">
    <property type="term" value="C:cytosolic large ribosomal subunit"/>
    <property type="evidence" value="ECO:0000318"/>
    <property type="project" value="GO_Central"/>
</dbReference>
<dbReference type="GO" id="GO:0019843">
    <property type="term" value="F:rRNA binding"/>
    <property type="evidence" value="ECO:0007669"/>
    <property type="project" value="UniProtKB-UniRule"/>
</dbReference>
<dbReference type="GO" id="GO:0003735">
    <property type="term" value="F:structural constituent of ribosome"/>
    <property type="evidence" value="ECO:0000318"/>
    <property type="project" value="GO_Central"/>
</dbReference>
<dbReference type="GO" id="GO:0006412">
    <property type="term" value="P:translation"/>
    <property type="evidence" value="ECO:0007669"/>
    <property type="project" value="UniProtKB-UniRule"/>
</dbReference>
<dbReference type="Gene3D" id="3.100.10.10">
    <property type="match status" value="1"/>
</dbReference>
<dbReference type="HAMAP" id="MF_01341">
    <property type="entry name" value="Ribosomal_uL15"/>
    <property type="match status" value="1"/>
</dbReference>
<dbReference type="InterPro" id="IPR030878">
    <property type="entry name" value="Ribosomal_uL15"/>
</dbReference>
<dbReference type="InterPro" id="IPR021131">
    <property type="entry name" value="Ribosomal_uL15/eL18"/>
</dbReference>
<dbReference type="InterPro" id="IPR036227">
    <property type="entry name" value="Ribosomal_uL15/eL18_sf"/>
</dbReference>
<dbReference type="InterPro" id="IPR005749">
    <property type="entry name" value="Ribosomal_uL15_bac-type"/>
</dbReference>
<dbReference type="InterPro" id="IPR001196">
    <property type="entry name" value="Ribosomal_uL15_CS"/>
</dbReference>
<dbReference type="NCBIfam" id="TIGR01071">
    <property type="entry name" value="rplO_bact"/>
    <property type="match status" value="1"/>
</dbReference>
<dbReference type="PANTHER" id="PTHR12934">
    <property type="entry name" value="50S RIBOSOMAL PROTEIN L15"/>
    <property type="match status" value="1"/>
</dbReference>
<dbReference type="PANTHER" id="PTHR12934:SF11">
    <property type="entry name" value="LARGE RIBOSOMAL SUBUNIT PROTEIN UL15M"/>
    <property type="match status" value="1"/>
</dbReference>
<dbReference type="Pfam" id="PF00828">
    <property type="entry name" value="Ribosomal_L27A"/>
    <property type="match status" value="1"/>
</dbReference>
<dbReference type="SUPFAM" id="SSF52080">
    <property type="entry name" value="Ribosomal proteins L15p and L18e"/>
    <property type="match status" value="1"/>
</dbReference>
<dbReference type="PROSITE" id="PS00475">
    <property type="entry name" value="RIBOSOMAL_L15"/>
    <property type="match status" value="1"/>
</dbReference>
<evidence type="ECO:0000255" key="1">
    <source>
        <dbReference type="HAMAP-Rule" id="MF_01341"/>
    </source>
</evidence>
<evidence type="ECO:0000256" key="2">
    <source>
        <dbReference type="SAM" id="MobiDB-lite"/>
    </source>
</evidence>
<evidence type="ECO:0000305" key="3"/>
<gene>
    <name evidence="1" type="primary">rplO</name>
    <name type="ordered locus">bll5381</name>
</gene>
<organism>
    <name type="scientific">Bradyrhizobium diazoefficiens (strain JCM 10833 / BCRC 13528 / IAM 13628 / NBRC 14792 / USDA 110)</name>
    <dbReference type="NCBI Taxonomy" id="224911"/>
    <lineage>
        <taxon>Bacteria</taxon>
        <taxon>Pseudomonadati</taxon>
        <taxon>Pseudomonadota</taxon>
        <taxon>Alphaproteobacteria</taxon>
        <taxon>Hyphomicrobiales</taxon>
        <taxon>Nitrobacteraceae</taxon>
        <taxon>Bradyrhizobium</taxon>
    </lineage>
</organism>
<accession>Q89JA3</accession>
<name>RL15_BRADU</name>